<gene>
    <name evidence="1" type="primary">gatA</name>
    <name type="ordered locus">EF_0725</name>
</gene>
<proteinExistence type="inferred from homology"/>
<comment type="function">
    <text evidence="1">Allows the formation of correctly charged Gln-tRNA(Gln) through the transamidation of misacylated Glu-tRNA(Gln) in organisms which lack glutaminyl-tRNA synthetase. The reaction takes place in the presence of glutamine and ATP through an activated gamma-phospho-Glu-tRNA(Gln).</text>
</comment>
<comment type="catalytic activity">
    <reaction evidence="1">
        <text>L-glutamyl-tRNA(Gln) + L-glutamine + ATP + H2O = L-glutaminyl-tRNA(Gln) + L-glutamate + ADP + phosphate + H(+)</text>
        <dbReference type="Rhea" id="RHEA:17521"/>
        <dbReference type="Rhea" id="RHEA-COMP:9681"/>
        <dbReference type="Rhea" id="RHEA-COMP:9684"/>
        <dbReference type="ChEBI" id="CHEBI:15377"/>
        <dbReference type="ChEBI" id="CHEBI:15378"/>
        <dbReference type="ChEBI" id="CHEBI:29985"/>
        <dbReference type="ChEBI" id="CHEBI:30616"/>
        <dbReference type="ChEBI" id="CHEBI:43474"/>
        <dbReference type="ChEBI" id="CHEBI:58359"/>
        <dbReference type="ChEBI" id="CHEBI:78520"/>
        <dbReference type="ChEBI" id="CHEBI:78521"/>
        <dbReference type="ChEBI" id="CHEBI:456216"/>
        <dbReference type="EC" id="6.3.5.7"/>
    </reaction>
</comment>
<comment type="subunit">
    <text evidence="1">Heterotrimer of A, B and C subunits.</text>
</comment>
<comment type="similarity">
    <text evidence="1">Belongs to the amidase family. GatA subfamily.</text>
</comment>
<protein>
    <recommendedName>
        <fullName evidence="1">Glutamyl-tRNA(Gln) amidotransferase subunit A</fullName>
        <shortName evidence="1">Glu-ADT subunit A</shortName>
        <ecNumber evidence="1">6.3.5.7</ecNumber>
    </recommendedName>
</protein>
<dbReference type="EC" id="6.3.5.7" evidence="1"/>
<dbReference type="EMBL" id="AE016830">
    <property type="protein sequence ID" value="AAO80545.1"/>
    <property type="molecule type" value="Genomic_DNA"/>
</dbReference>
<dbReference type="RefSeq" id="NP_814475.1">
    <property type="nucleotide sequence ID" value="NC_004668.1"/>
</dbReference>
<dbReference type="RefSeq" id="WP_002361259.1">
    <property type="nucleotide sequence ID" value="NZ_KE136527.1"/>
</dbReference>
<dbReference type="SMR" id="Q837V3"/>
<dbReference type="STRING" id="226185.EF_0725"/>
<dbReference type="EnsemblBacteria" id="AAO80545">
    <property type="protein sequence ID" value="AAO80545"/>
    <property type="gene ID" value="EF_0725"/>
</dbReference>
<dbReference type="KEGG" id="efa:EF0725"/>
<dbReference type="PATRIC" id="fig|226185.45.peg.2666"/>
<dbReference type="eggNOG" id="COG0154">
    <property type="taxonomic scope" value="Bacteria"/>
</dbReference>
<dbReference type="HOGENOM" id="CLU_009600_0_3_9"/>
<dbReference type="Proteomes" id="UP000001415">
    <property type="component" value="Chromosome"/>
</dbReference>
<dbReference type="GO" id="GO:0030956">
    <property type="term" value="C:glutamyl-tRNA(Gln) amidotransferase complex"/>
    <property type="evidence" value="ECO:0007669"/>
    <property type="project" value="InterPro"/>
</dbReference>
<dbReference type="GO" id="GO:0005524">
    <property type="term" value="F:ATP binding"/>
    <property type="evidence" value="ECO:0007669"/>
    <property type="project" value="UniProtKB-KW"/>
</dbReference>
<dbReference type="GO" id="GO:0050567">
    <property type="term" value="F:glutaminyl-tRNA synthase (glutamine-hydrolyzing) activity"/>
    <property type="evidence" value="ECO:0007669"/>
    <property type="project" value="UniProtKB-UniRule"/>
</dbReference>
<dbReference type="GO" id="GO:0006412">
    <property type="term" value="P:translation"/>
    <property type="evidence" value="ECO:0007669"/>
    <property type="project" value="UniProtKB-UniRule"/>
</dbReference>
<dbReference type="Gene3D" id="3.90.1300.10">
    <property type="entry name" value="Amidase signature (AS) domain"/>
    <property type="match status" value="1"/>
</dbReference>
<dbReference type="HAMAP" id="MF_00120">
    <property type="entry name" value="GatA"/>
    <property type="match status" value="1"/>
</dbReference>
<dbReference type="InterPro" id="IPR000120">
    <property type="entry name" value="Amidase"/>
</dbReference>
<dbReference type="InterPro" id="IPR020556">
    <property type="entry name" value="Amidase_CS"/>
</dbReference>
<dbReference type="InterPro" id="IPR023631">
    <property type="entry name" value="Amidase_dom"/>
</dbReference>
<dbReference type="InterPro" id="IPR036928">
    <property type="entry name" value="AS_sf"/>
</dbReference>
<dbReference type="InterPro" id="IPR004412">
    <property type="entry name" value="GatA"/>
</dbReference>
<dbReference type="NCBIfam" id="TIGR00132">
    <property type="entry name" value="gatA"/>
    <property type="match status" value="1"/>
</dbReference>
<dbReference type="PANTHER" id="PTHR11895:SF151">
    <property type="entry name" value="GLUTAMYL-TRNA(GLN) AMIDOTRANSFERASE SUBUNIT A"/>
    <property type="match status" value="1"/>
</dbReference>
<dbReference type="PANTHER" id="PTHR11895">
    <property type="entry name" value="TRANSAMIDASE"/>
    <property type="match status" value="1"/>
</dbReference>
<dbReference type="Pfam" id="PF01425">
    <property type="entry name" value="Amidase"/>
    <property type="match status" value="1"/>
</dbReference>
<dbReference type="SUPFAM" id="SSF75304">
    <property type="entry name" value="Amidase signature (AS) enzymes"/>
    <property type="match status" value="1"/>
</dbReference>
<dbReference type="PROSITE" id="PS00571">
    <property type="entry name" value="AMIDASES"/>
    <property type="match status" value="1"/>
</dbReference>
<sequence>MEKLYDKSLTELHDLLVSKEITAVDLTEETLNRIQDTEEQLGSFITVSEEKAMALAKAIDLKGITESNPLAGIPIGIKDNIVTKDILTTAGSKMLHNFDPIYDATVMDKVYQADMIPVGKLNMDEFAMGGSTETSYFKKTKNAWDQTKVPGGSSGGSASAVAAGQVPVSLGSDTGGSIRQPAAFNGIVGLKPTYGRVSRFGLIAFASSLDQIGPLTRNVKDNALALNAISGYDEKDGTSAGVSVPDFTADLTGDIKGMKIALPKEYLGEGVQPDVREAVLKAAETFKALGATVEEVSLPHSKYGIAAYYIIASSEASSNLQRFDGIRYGYRSENVQNLEDVYVNSRSEGFGTEVKRRIMLGTFSLSAGYYDAHFKKAGQVRTLIKQDFENVFADYDLIIGPSTPTVAFGLGENINDPITMYMYDILTVPVNLAGLPGMSIPAGFSEGLPVGLQIIGKHFDEHTMYKAAYAFEQATDFHTKKPVILGGND</sequence>
<keyword id="KW-0067">ATP-binding</keyword>
<keyword id="KW-0436">Ligase</keyword>
<keyword id="KW-0547">Nucleotide-binding</keyword>
<keyword id="KW-0648">Protein biosynthesis</keyword>
<keyword id="KW-1185">Reference proteome</keyword>
<feature type="chain" id="PRO_0000105162" description="Glutamyl-tRNA(Gln) amidotransferase subunit A">
    <location>
        <begin position="1"/>
        <end position="489"/>
    </location>
</feature>
<feature type="active site" description="Charge relay system" evidence="1">
    <location>
        <position position="78"/>
    </location>
</feature>
<feature type="active site" description="Charge relay system" evidence="1">
    <location>
        <position position="153"/>
    </location>
</feature>
<feature type="active site" description="Acyl-ester intermediate" evidence="1">
    <location>
        <position position="177"/>
    </location>
</feature>
<accession>Q837V3</accession>
<evidence type="ECO:0000255" key="1">
    <source>
        <dbReference type="HAMAP-Rule" id="MF_00120"/>
    </source>
</evidence>
<reference key="1">
    <citation type="journal article" date="2003" name="Science">
        <title>Role of mobile DNA in the evolution of vancomycin-resistant Enterococcus faecalis.</title>
        <authorList>
            <person name="Paulsen I.T."/>
            <person name="Banerjei L."/>
            <person name="Myers G.S.A."/>
            <person name="Nelson K.E."/>
            <person name="Seshadri R."/>
            <person name="Read T.D."/>
            <person name="Fouts D.E."/>
            <person name="Eisen J.A."/>
            <person name="Gill S.R."/>
            <person name="Heidelberg J.F."/>
            <person name="Tettelin H."/>
            <person name="Dodson R.J."/>
            <person name="Umayam L.A."/>
            <person name="Brinkac L.M."/>
            <person name="Beanan M.J."/>
            <person name="Daugherty S.C."/>
            <person name="DeBoy R.T."/>
            <person name="Durkin S.A."/>
            <person name="Kolonay J.F."/>
            <person name="Madupu R."/>
            <person name="Nelson W.C."/>
            <person name="Vamathevan J.J."/>
            <person name="Tran B."/>
            <person name="Upton J."/>
            <person name="Hansen T."/>
            <person name="Shetty J."/>
            <person name="Khouri H.M."/>
            <person name="Utterback T.R."/>
            <person name="Radune D."/>
            <person name="Ketchum K.A."/>
            <person name="Dougherty B.A."/>
            <person name="Fraser C.M."/>
        </authorList>
    </citation>
    <scope>NUCLEOTIDE SEQUENCE [LARGE SCALE GENOMIC DNA]</scope>
    <source>
        <strain>ATCC 700802 / V583</strain>
    </source>
</reference>
<name>GATA_ENTFA</name>
<organism>
    <name type="scientific">Enterococcus faecalis (strain ATCC 700802 / V583)</name>
    <dbReference type="NCBI Taxonomy" id="226185"/>
    <lineage>
        <taxon>Bacteria</taxon>
        <taxon>Bacillati</taxon>
        <taxon>Bacillota</taxon>
        <taxon>Bacilli</taxon>
        <taxon>Lactobacillales</taxon>
        <taxon>Enterococcaceae</taxon>
        <taxon>Enterococcus</taxon>
    </lineage>
</organism>